<organism>
    <name type="scientific">Haemophilus influenzae (strain ATCC 51907 / DSM 11121 / KW20 / Rd)</name>
    <dbReference type="NCBI Taxonomy" id="71421"/>
    <lineage>
        <taxon>Bacteria</taxon>
        <taxon>Pseudomonadati</taxon>
        <taxon>Pseudomonadota</taxon>
        <taxon>Gammaproteobacteria</taxon>
        <taxon>Pasteurellales</taxon>
        <taxon>Pasteurellaceae</taxon>
        <taxon>Haemophilus</taxon>
    </lineage>
</organism>
<name>Y080_HAEIN</name>
<accession>P43936</accession>
<keyword id="KW-1185">Reference proteome</keyword>
<sequence>MSIKQHRPKVGEILECDYGQFSHTCHVDGHIPPEMVKKRLVVVLNAKLNGLILVAPISSKINLDGIKNGYHIEIDSELIKATGFYDKRTRWIKSELIQSVSRLRLYHIYDKGTKITQYLPRDVVTKVQRAIIKAINASSLLDK</sequence>
<proteinExistence type="predicted"/>
<feature type="chain" id="PRO_0000169647" description="Uncharacterized protein HI_0080">
    <location>
        <begin position="1"/>
        <end position="143"/>
    </location>
</feature>
<evidence type="ECO:0000305" key="1"/>
<comment type="similarity">
    <text evidence="1">To E.coli YifN.</text>
</comment>
<gene>
    <name type="ordered locus">HI_0080</name>
</gene>
<reference key="1">
    <citation type="journal article" date="1995" name="Science">
        <title>Whole-genome random sequencing and assembly of Haemophilus influenzae Rd.</title>
        <authorList>
            <person name="Fleischmann R.D."/>
            <person name="Adams M.D."/>
            <person name="White O."/>
            <person name="Clayton R.A."/>
            <person name="Kirkness E.F."/>
            <person name="Kerlavage A.R."/>
            <person name="Bult C.J."/>
            <person name="Tomb J.-F."/>
            <person name="Dougherty B.A."/>
            <person name="Merrick J.M."/>
            <person name="McKenney K."/>
            <person name="Sutton G.G."/>
            <person name="FitzHugh W."/>
            <person name="Fields C.A."/>
            <person name="Gocayne J.D."/>
            <person name="Scott J.D."/>
            <person name="Shirley R."/>
            <person name="Liu L.-I."/>
            <person name="Glodek A."/>
            <person name="Kelley J.M."/>
            <person name="Weidman J.F."/>
            <person name="Phillips C.A."/>
            <person name="Spriggs T."/>
            <person name="Hedblom E."/>
            <person name="Cotton M.D."/>
            <person name="Utterback T.R."/>
            <person name="Hanna M.C."/>
            <person name="Nguyen D.T."/>
            <person name="Saudek D.M."/>
            <person name="Brandon R.C."/>
            <person name="Fine L.D."/>
            <person name="Fritchman J.L."/>
            <person name="Fuhrmann J.L."/>
            <person name="Geoghagen N.S.M."/>
            <person name="Gnehm C.L."/>
            <person name="McDonald L.A."/>
            <person name="Small K.V."/>
            <person name="Fraser C.M."/>
            <person name="Smith H.O."/>
            <person name="Venter J.C."/>
        </authorList>
    </citation>
    <scope>NUCLEOTIDE SEQUENCE [LARGE SCALE GENOMIC DNA]</scope>
    <source>
        <strain>ATCC 51907 / DSM 11121 / KW20 / Rd</strain>
    </source>
</reference>
<dbReference type="EMBL" id="L42023">
    <property type="protein sequence ID" value="AAC21755.1"/>
    <property type="molecule type" value="Genomic_DNA"/>
</dbReference>
<dbReference type="PIR" id="H64000">
    <property type="entry name" value="H64000"/>
</dbReference>
<dbReference type="RefSeq" id="NP_438253.1">
    <property type="nucleotide sequence ID" value="NC_000907.1"/>
</dbReference>
<dbReference type="SMR" id="P43936"/>
<dbReference type="STRING" id="71421.HI_0080"/>
<dbReference type="EnsemblBacteria" id="AAC21755">
    <property type="protein sequence ID" value="AAC21755"/>
    <property type="gene ID" value="HI_0080"/>
</dbReference>
<dbReference type="KEGG" id="hin:HI_0080"/>
<dbReference type="PATRIC" id="fig|71421.8.peg.81"/>
<dbReference type="eggNOG" id="COG3692">
    <property type="taxonomic scope" value="Bacteria"/>
</dbReference>
<dbReference type="HOGENOM" id="CLU_141537_0_0_6"/>
<dbReference type="OrthoDB" id="7565736at2"/>
<dbReference type="BioCyc" id="HINF71421:G1GJ1-81-MONOMER"/>
<dbReference type="Proteomes" id="UP000000579">
    <property type="component" value="Chromosome"/>
</dbReference>
<dbReference type="GO" id="GO:0003677">
    <property type="term" value="F:DNA binding"/>
    <property type="evidence" value="ECO:0007669"/>
    <property type="project" value="InterPro"/>
</dbReference>
<dbReference type="Gene3D" id="2.30.30.110">
    <property type="match status" value="1"/>
</dbReference>
<dbReference type="InterPro" id="IPR003477">
    <property type="entry name" value="PemK-like"/>
</dbReference>
<dbReference type="InterPro" id="IPR011067">
    <property type="entry name" value="Plasmid_toxin/cell-grow_inhib"/>
</dbReference>
<dbReference type="Pfam" id="PF02452">
    <property type="entry name" value="PemK_toxin"/>
    <property type="match status" value="1"/>
</dbReference>
<dbReference type="SUPFAM" id="SSF50118">
    <property type="entry name" value="Cell growth inhibitor/plasmid maintenance toxic component"/>
    <property type="match status" value="1"/>
</dbReference>
<protein>
    <recommendedName>
        <fullName>Uncharacterized protein HI_0080</fullName>
    </recommendedName>
</protein>